<evidence type="ECO:0000250" key="1"/>
<evidence type="ECO:0000255" key="2">
    <source>
        <dbReference type="PROSITE-ProRule" id="PRU00176"/>
    </source>
</evidence>
<evidence type="ECO:0000269" key="3">
    <source>
    </source>
</evidence>
<evidence type="ECO:0000305" key="4"/>
<reference key="1">
    <citation type="journal article" date="1999" name="RNA">
        <title>Identification of a protein component of a mammalian tRNA(Sec) complex implicated in the decoding of UGA as selenocysteine.</title>
        <authorList>
            <person name="Ding F."/>
            <person name="Grabowski P.J."/>
        </authorList>
    </citation>
    <scope>NUCLEOTIDE SEQUENCE [MRNA]</scope>
    <scope>IDENTIFICATION IN A COMPLEX WITH TRNA(SEC)</scope>
    <scope>INTERACTION WITH SEPSECS</scope>
    <scope>SUBCELLULAR LOCATION</scope>
    <scope>TISSUE SPECIFICITY</scope>
    <source>
        <tissue>Cerebellum</tissue>
    </source>
</reference>
<accession>Q9QZI7</accession>
<feature type="chain" id="PRO_0000304920" description="tRNA selenocysteine 1-associated protein 1">
    <location>
        <begin position="1"/>
        <end position="287"/>
    </location>
</feature>
<feature type="domain" description="RRM 1" evidence="2">
    <location>
        <begin position="3"/>
        <end position="86"/>
    </location>
</feature>
<feature type="domain" description="RRM 2" evidence="2">
    <location>
        <begin position="96"/>
        <end position="175"/>
    </location>
</feature>
<comment type="function">
    <text evidence="1">Involved in the early steps of selenocysteine biosynthesis and tRNA(Sec) charging to the later steps resulting in the cotranslational incorporation of selenocysteine into selenoproteins. Stabilizes the SECISBP2, EEFSEC and tRNA(Sec) complex. May be involved in the methylation of tRNA(Sec). Enhances efficiency of selenoproteins synthesis (By similarity).</text>
</comment>
<comment type="subunit">
    <text evidence="1 3">Component of the tRNA(Sec) complex composed at least of EEFSEC, SECISBP2, SEPHS1, SEPSECS, TRNAU1AP and tRNA(Sec). Associates with mRNP and/or polysomes (By similarity). Found in a complex with tRNA(Sec). Interacts with SEPSECS.</text>
</comment>
<comment type="subcellular location">
    <subcellularLocation>
        <location evidence="3">Nucleus</location>
    </subcellularLocation>
    <subcellularLocation>
        <location evidence="3">Cytoplasm</location>
    </subcellularLocation>
    <text>Abundant in the nucleus.</text>
</comment>
<comment type="tissue specificity">
    <text evidence="3">Ubiquitous.</text>
</comment>
<comment type="similarity">
    <text evidence="4">Belongs to the RRM TRSPAP family.</text>
</comment>
<gene>
    <name type="primary">Trnau1ap</name>
    <name type="synonym">Secp43</name>
    <name type="synonym">Trspap1</name>
</gene>
<organism>
    <name type="scientific">Rattus norvegicus</name>
    <name type="common">Rat</name>
    <dbReference type="NCBI Taxonomy" id="10116"/>
    <lineage>
        <taxon>Eukaryota</taxon>
        <taxon>Metazoa</taxon>
        <taxon>Chordata</taxon>
        <taxon>Craniata</taxon>
        <taxon>Vertebrata</taxon>
        <taxon>Euteleostomi</taxon>
        <taxon>Mammalia</taxon>
        <taxon>Eutheria</taxon>
        <taxon>Euarchontoglires</taxon>
        <taxon>Glires</taxon>
        <taxon>Rodentia</taxon>
        <taxon>Myomorpha</taxon>
        <taxon>Muroidea</taxon>
        <taxon>Muridae</taxon>
        <taxon>Murinae</taxon>
        <taxon>Rattus</taxon>
    </lineage>
</organism>
<keyword id="KW-0963">Cytoplasm</keyword>
<keyword id="KW-0539">Nucleus</keyword>
<keyword id="KW-0648">Protein biosynthesis</keyword>
<keyword id="KW-1185">Reference proteome</keyword>
<keyword id="KW-0677">Repeat</keyword>
<keyword id="KW-0694">RNA-binding</keyword>
<proteinExistence type="evidence at protein level"/>
<protein>
    <recommendedName>
        <fullName>tRNA selenocysteine 1-associated protein 1</fullName>
    </recommendedName>
    <alternativeName>
        <fullName>SECp43</fullName>
    </alternativeName>
    <alternativeName>
        <fullName>tRNA selenocysteine-associated protein 1</fullName>
    </alternativeName>
</protein>
<dbReference type="EMBL" id="AF181856">
    <property type="protein sequence ID" value="AAD54419.1"/>
    <property type="molecule type" value="mRNA"/>
</dbReference>
<dbReference type="RefSeq" id="NP_075416.1">
    <property type="nucleotide sequence ID" value="NM_023027.2"/>
</dbReference>
<dbReference type="SMR" id="Q9QZI7"/>
<dbReference type="FunCoup" id="Q9QZI7">
    <property type="interactions" value="4279"/>
</dbReference>
<dbReference type="STRING" id="10116.ENSRNOP00000070906"/>
<dbReference type="GlyGen" id="Q9QZI7">
    <property type="glycosylation" value="1 site"/>
</dbReference>
<dbReference type="PhosphoSitePlus" id="Q9QZI7"/>
<dbReference type="PaxDb" id="10116-ENSRNOP00000065702"/>
<dbReference type="Ensembl" id="ENSRNOT00000113510.1">
    <property type="protein sequence ID" value="ENSRNOP00000084120.1"/>
    <property type="gene ID" value="ENSRNOG00000055344.2"/>
</dbReference>
<dbReference type="GeneID" id="65241"/>
<dbReference type="KEGG" id="rno:65241"/>
<dbReference type="AGR" id="RGD:619995"/>
<dbReference type="CTD" id="54952"/>
<dbReference type="RGD" id="619995">
    <property type="gene designation" value="Trnau1ap"/>
</dbReference>
<dbReference type="eggNOG" id="KOG0118">
    <property type="taxonomic scope" value="Eukaryota"/>
</dbReference>
<dbReference type="GeneTree" id="ENSGT00940000156139"/>
<dbReference type="InParanoid" id="Q9QZI7"/>
<dbReference type="OMA" id="YDMNGYV"/>
<dbReference type="OrthoDB" id="446113at2759"/>
<dbReference type="PhylomeDB" id="Q9QZI7"/>
<dbReference type="PRO" id="PR:Q9QZI7"/>
<dbReference type="Proteomes" id="UP000002494">
    <property type="component" value="Chromosome 5"/>
</dbReference>
<dbReference type="GO" id="GO:0005737">
    <property type="term" value="C:cytoplasm"/>
    <property type="evidence" value="ECO:0007669"/>
    <property type="project" value="UniProtKB-SubCell"/>
</dbReference>
<dbReference type="GO" id="GO:0005634">
    <property type="term" value="C:nucleus"/>
    <property type="evidence" value="ECO:0000250"/>
    <property type="project" value="HGNC-UCL"/>
</dbReference>
<dbReference type="GO" id="GO:0000049">
    <property type="term" value="F:tRNA binding"/>
    <property type="evidence" value="ECO:0000314"/>
    <property type="project" value="RGD"/>
</dbReference>
<dbReference type="GO" id="GO:0001514">
    <property type="term" value="P:selenocysteine incorporation"/>
    <property type="evidence" value="ECO:0000250"/>
    <property type="project" value="HGNC-UCL"/>
</dbReference>
<dbReference type="CDD" id="cd12610">
    <property type="entry name" value="RRM1_SECp43"/>
    <property type="match status" value="1"/>
</dbReference>
<dbReference type="CDD" id="cd12612">
    <property type="entry name" value="RRM2_SECp43"/>
    <property type="match status" value="1"/>
</dbReference>
<dbReference type="FunFam" id="3.30.70.330:FF:000166">
    <property type="entry name" value="Trna selenocysteine 1-associated protein 1"/>
    <property type="match status" value="1"/>
</dbReference>
<dbReference type="FunFam" id="3.30.70.330:FF:000159">
    <property type="entry name" value="tRNA selenocysteine 1-associated protein 1"/>
    <property type="match status" value="1"/>
</dbReference>
<dbReference type="Gene3D" id="3.30.70.330">
    <property type="match status" value="2"/>
</dbReference>
<dbReference type="InterPro" id="IPR012677">
    <property type="entry name" value="Nucleotide-bd_a/b_plait_sf"/>
</dbReference>
<dbReference type="InterPro" id="IPR035979">
    <property type="entry name" value="RBD_domain_sf"/>
</dbReference>
<dbReference type="InterPro" id="IPR000504">
    <property type="entry name" value="RRM_dom"/>
</dbReference>
<dbReference type="InterPro" id="IPR034510">
    <property type="entry name" value="SECp43_RRM2"/>
</dbReference>
<dbReference type="InterPro" id="IPR040434">
    <property type="entry name" value="TSAP1"/>
</dbReference>
<dbReference type="InterPro" id="IPR041085">
    <property type="entry name" value="TSAP1_C"/>
</dbReference>
<dbReference type="PANTHER" id="PTHR37457:SF2">
    <property type="entry name" value="TRNA SELENOCYSTEINE 1-ASSOCIATED PROTEIN 1"/>
    <property type="match status" value="1"/>
</dbReference>
<dbReference type="PANTHER" id="PTHR37457">
    <property type="entry name" value="TRNA SELENOCYSTEINE 1-ASSOCIATED PROTEIN 1-RELATED"/>
    <property type="match status" value="1"/>
</dbReference>
<dbReference type="Pfam" id="PF00076">
    <property type="entry name" value="RRM_1"/>
    <property type="match status" value="2"/>
</dbReference>
<dbReference type="Pfam" id="PF17654">
    <property type="entry name" value="Trnau1ap"/>
    <property type="match status" value="1"/>
</dbReference>
<dbReference type="SMART" id="SM00360">
    <property type="entry name" value="RRM"/>
    <property type="match status" value="2"/>
</dbReference>
<dbReference type="SUPFAM" id="SSF54928">
    <property type="entry name" value="RNA-binding domain, RBD"/>
    <property type="match status" value="1"/>
</dbReference>
<dbReference type="PROSITE" id="PS50102">
    <property type="entry name" value="RRM"/>
    <property type="match status" value="2"/>
</dbReference>
<name>TSAP1_RAT</name>
<sequence length="287" mass="32454">MAASLWMGDLEPYMDENFISRAFATMGETVMSVKIIRNRLTGIPAGYCFVEFADLATAEKCLHKINGKPLPGATPAKRFKLNYATYGKQPDNSPEYSLFVGDLTPDVDDGMLYEFFVKVYPSCRGGKVVLDQTGVSKGYGFVKFTDELEQKRALTECQGAVGLGCKPVRLSVAIPKASRVKPVEYSQMYSYSYNQYYQQYQNYYAQWGYDQNTGSYSYSYPQYGYTQSTMQTYEEVGDDALEDPAPQLDVTEANKEFMEQSEELYDALMDCHWQPLDTVSSEIPAMM</sequence>